<sequence>MKVAYFDCFAGIAGDMTVAALIELGLPLEVLRQELAGLPFSGYTLESRKVERHGVAGTSFKVTLTEADQPHRHYSGIAKMIEASGLKPRVKELAQRIFRRLAEAEAAVHGVPLERVHFHEVGAVDSIVDIVGTAIGLDYLGVEALYASGLPYGRGFVQTAHGRLPVPAPATAELMEGIPLTADIGEGERVTPTGAAIIAALADGFGPPPPMTPLGTGYGAGEKDFPELPNLLRVLLGESTEAKGHQEVLVIETHIDDMNPEIFGFLMERLLEAGALDVAFSPLQMKKNRPATCLTVIADPADLEKLSAIVLSESTAIGLRYYPARRVTAARSLETRETTLGEVAVKVLETGRVTPEYDSCRRIALEKGIPLIEVYRTVERECGQA</sequence>
<gene>
    <name type="ordered locus">Gbem_3626</name>
</gene>
<keyword id="KW-0533">Nickel</keyword>
<keyword id="KW-1185">Reference proteome</keyword>
<evidence type="ECO:0000255" key="1">
    <source>
        <dbReference type="HAMAP-Rule" id="MF_01074"/>
    </source>
</evidence>
<feature type="chain" id="PRO_1000136690" description="Putative nickel insertion protein">
    <location>
        <begin position="1"/>
        <end position="385"/>
    </location>
</feature>
<name>Y3626_CITBB</name>
<accession>B5ED01</accession>
<protein>
    <recommendedName>
        <fullName evidence="1">Putative nickel insertion protein</fullName>
    </recommendedName>
</protein>
<organism>
    <name type="scientific">Citrifermentans bemidjiense (strain ATCC BAA-1014 / DSM 16622 / JCM 12645 / Bem)</name>
    <name type="common">Geobacter bemidjiensis</name>
    <dbReference type="NCBI Taxonomy" id="404380"/>
    <lineage>
        <taxon>Bacteria</taxon>
        <taxon>Pseudomonadati</taxon>
        <taxon>Thermodesulfobacteriota</taxon>
        <taxon>Desulfuromonadia</taxon>
        <taxon>Geobacterales</taxon>
        <taxon>Geobacteraceae</taxon>
        <taxon>Citrifermentans</taxon>
    </lineage>
</organism>
<dbReference type="EMBL" id="CP001124">
    <property type="protein sequence ID" value="ACH40618.1"/>
    <property type="molecule type" value="Genomic_DNA"/>
</dbReference>
<dbReference type="RefSeq" id="WP_012532055.1">
    <property type="nucleotide sequence ID" value="NC_011146.1"/>
</dbReference>
<dbReference type="SMR" id="B5ED01"/>
<dbReference type="STRING" id="404380.Gbem_3626"/>
<dbReference type="KEGG" id="gbm:Gbem_3626"/>
<dbReference type="eggNOG" id="COG1641">
    <property type="taxonomic scope" value="Bacteria"/>
</dbReference>
<dbReference type="HOGENOM" id="CLU_028523_2_1_7"/>
<dbReference type="OrthoDB" id="9765625at2"/>
<dbReference type="Proteomes" id="UP000008825">
    <property type="component" value="Chromosome"/>
</dbReference>
<dbReference type="GO" id="GO:0016829">
    <property type="term" value="F:lyase activity"/>
    <property type="evidence" value="ECO:0007669"/>
    <property type="project" value="UniProtKB-UniRule"/>
</dbReference>
<dbReference type="GO" id="GO:0016151">
    <property type="term" value="F:nickel cation binding"/>
    <property type="evidence" value="ECO:0007669"/>
    <property type="project" value="UniProtKB-UniRule"/>
</dbReference>
<dbReference type="Gene3D" id="3.10.20.300">
    <property type="entry name" value="mk0293 like domain"/>
    <property type="match status" value="1"/>
</dbReference>
<dbReference type="Gene3D" id="3.30.70.1380">
    <property type="entry name" value="Transcriptional regulatory protein pf0864 domain like"/>
    <property type="match status" value="1"/>
</dbReference>
<dbReference type="HAMAP" id="MF_01074">
    <property type="entry name" value="LarC"/>
    <property type="match status" value="1"/>
</dbReference>
<dbReference type="InterPro" id="IPR002822">
    <property type="entry name" value="Ni_insertion"/>
</dbReference>
<dbReference type="NCBIfam" id="TIGR00299">
    <property type="entry name" value="nickel pincer cofactor biosynthesis protein LarC"/>
    <property type="match status" value="1"/>
</dbReference>
<dbReference type="PANTHER" id="PTHR36566">
    <property type="entry name" value="NICKEL INSERTION PROTEIN-RELATED"/>
    <property type="match status" value="1"/>
</dbReference>
<dbReference type="PANTHER" id="PTHR36566:SF1">
    <property type="entry name" value="PYRIDINIUM-3,5-BISTHIOCARBOXYLIC ACID MONONUCLEOTIDE NICKEL INSERTION PROTEIN"/>
    <property type="match status" value="1"/>
</dbReference>
<dbReference type="Pfam" id="PF01969">
    <property type="entry name" value="Ni_insertion"/>
    <property type="match status" value="1"/>
</dbReference>
<comment type="similarity">
    <text evidence="1">Belongs to the LarC family.</text>
</comment>
<proteinExistence type="inferred from homology"/>
<reference key="1">
    <citation type="submission" date="2008-07" db="EMBL/GenBank/DDBJ databases">
        <title>Complete sequence of Geobacter bemidjiensis BEM.</title>
        <authorList>
            <consortium name="US DOE Joint Genome Institute"/>
            <person name="Lucas S."/>
            <person name="Copeland A."/>
            <person name="Lapidus A."/>
            <person name="Glavina del Rio T."/>
            <person name="Dalin E."/>
            <person name="Tice H."/>
            <person name="Bruce D."/>
            <person name="Goodwin L."/>
            <person name="Pitluck S."/>
            <person name="Kiss H."/>
            <person name="Brettin T."/>
            <person name="Detter J.C."/>
            <person name="Han C."/>
            <person name="Kuske C.R."/>
            <person name="Schmutz J."/>
            <person name="Larimer F."/>
            <person name="Land M."/>
            <person name="Hauser L."/>
            <person name="Kyrpides N."/>
            <person name="Lykidis A."/>
            <person name="Lovley D."/>
            <person name="Richardson P."/>
        </authorList>
    </citation>
    <scope>NUCLEOTIDE SEQUENCE [LARGE SCALE GENOMIC DNA]</scope>
    <source>
        <strain>ATCC BAA-1014 / DSM 16622 / JCM 12645 / Bem</strain>
    </source>
</reference>